<protein>
    <recommendedName>
        <fullName evidence="1">3-phosphoshikimate 1-carboxyvinyltransferase</fullName>
        <ecNumber evidence="1">2.5.1.19</ecNumber>
    </recommendedName>
    <alternativeName>
        <fullName evidence="1">5-enolpyruvylshikimate-3-phosphate synthase</fullName>
        <shortName evidence="1">EPSP synthase</shortName>
        <shortName evidence="1">EPSPS</shortName>
    </alternativeName>
</protein>
<reference key="1">
    <citation type="journal article" date="2008" name="J. Bacteriol.">
        <title>The pangenome structure of Escherichia coli: comparative genomic analysis of E. coli commensal and pathogenic isolates.</title>
        <authorList>
            <person name="Rasko D.A."/>
            <person name="Rosovitz M.J."/>
            <person name="Myers G.S.A."/>
            <person name="Mongodin E.F."/>
            <person name="Fricke W.F."/>
            <person name="Gajer P."/>
            <person name="Crabtree J."/>
            <person name="Sebaihia M."/>
            <person name="Thomson N.R."/>
            <person name="Chaudhuri R."/>
            <person name="Henderson I.R."/>
            <person name="Sperandio V."/>
            <person name="Ravel J."/>
        </authorList>
    </citation>
    <scope>NUCLEOTIDE SEQUENCE [LARGE SCALE GENOMIC DNA]</scope>
    <source>
        <strain>HS</strain>
    </source>
</reference>
<comment type="function">
    <text evidence="1">Catalyzes the transfer of the enolpyruvyl moiety of phosphoenolpyruvate (PEP) to the 5-hydroxyl of shikimate-3-phosphate (S3P) to produce enolpyruvyl shikimate-3-phosphate and inorganic phosphate.</text>
</comment>
<comment type="catalytic activity">
    <reaction evidence="1">
        <text>3-phosphoshikimate + phosphoenolpyruvate = 5-O-(1-carboxyvinyl)-3-phosphoshikimate + phosphate</text>
        <dbReference type="Rhea" id="RHEA:21256"/>
        <dbReference type="ChEBI" id="CHEBI:43474"/>
        <dbReference type="ChEBI" id="CHEBI:57701"/>
        <dbReference type="ChEBI" id="CHEBI:58702"/>
        <dbReference type="ChEBI" id="CHEBI:145989"/>
        <dbReference type="EC" id="2.5.1.19"/>
    </reaction>
    <physiologicalReaction direction="left-to-right" evidence="1">
        <dbReference type="Rhea" id="RHEA:21257"/>
    </physiologicalReaction>
</comment>
<comment type="pathway">
    <text evidence="1">Metabolic intermediate biosynthesis; chorismate biosynthesis; chorismate from D-erythrose 4-phosphate and phosphoenolpyruvate: step 6/7.</text>
</comment>
<comment type="subunit">
    <text evidence="1">Monomer.</text>
</comment>
<comment type="subcellular location">
    <subcellularLocation>
        <location evidence="1">Cytoplasm</location>
    </subcellularLocation>
</comment>
<comment type="similarity">
    <text evidence="1">Belongs to the EPSP synthase family.</text>
</comment>
<keyword id="KW-0028">Amino-acid biosynthesis</keyword>
<keyword id="KW-0057">Aromatic amino acid biosynthesis</keyword>
<keyword id="KW-0963">Cytoplasm</keyword>
<keyword id="KW-0808">Transferase</keyword>
<organism>
    <name type="scientific">Escherichia coli O9:H4 (strain HS)</name>
    <dbReference type="NCBI Taxonomy" id="331112"/>
    <lineage>
        <taxon>Bacteria</taxon>
        <taxon>Pseudomonadati</taxon>
        <taxon>Pseudomonadota</taxon>
        <taxon>Gammaproteobacteria</taxon>
        <taxon>Enterobacterales</taxon>
        <taxon>Enterobacteriaceae</taxon>
        <taxon>Escherichia</taxon>
    </lineage>
</organism>
<evidence type="ECO:0000255" key="1">
    <source>
        <dbReference type="HAMAP-Rule" id="MF_00210"/>
    </source>
</evidence>
<dbReference type="EC" id="2.5.1.19" evidence="1"/>
<dbReference type="EMBL" id="CP000802">
    <property type="protein sequence ID" value="ABV05365.1"/>
    <property type="molecule type" value="Genomic_DNA"/>
</dbReference>
<dbReference type="RefSeq" id="WP_000445249.1">
    <property type="nucleotide sequence ID" value="NC_009800.1"/>
</dbReference>
<dbReference type="BMRB" id="A7ZYL1"/>
<dbReference type="SMR" id="A7ZYL1"/>
<dbReference type="KEGG" id="ecx:EcHS_A1014"/>
<dbReference type="HOGENOM" id="CLU_024321_0_0_6"/>
<dbReference type="UniPathway" id="UPA00053">
    <property type="reaction ID" value="UER00089"/>
</dbReference>
<dbReference type="GO" id="GO:0005737">
    <property type="term" value="C:cytoplasm"/>
    <property type="evidence" value="ECO:0007669"/>
    <property type="project" value="UniProtKB-SubCell"/>
</dbReference>
<dbReference type="GO" id="GO:0003866">
    <property type="term" value="F:3-phosphoshikimate 1-carboxyvinyltransferase activity"/>
    <property type="evidence" value="ECO:0007669"/>
    <property type="project" value="UniProtKB-UniRule"/>
</dbReference>
<dbReference type="GO" id="GO:0008652">
    <property type="term" value="P:amino acid biosynthetic process"/>
    <property type="evidence" value="ECO:0007669"/>
    <property type="project" value="UniProtKB-KW"/>
</dbReference>
<dbReference type="GO" id="GO:0009073">
    <property type="term" value="P:aromatic amino acid family biosynthetic process"/>
    <property type="evidence" value="ECO:0007669"/>
    <property type="project" value="UniProtKB-KW"/>
</dbReference>
<dbReference type="GO" id="GO:0009423">
    <property type="term" value="P:chorismate biosynthetic process"/>
    <property type="evidence" value="ECO:0007669"/>
    <property type="project" value="UniProtKB-UniRule"/>
</dbReference>
<dbReference type="CDD" id="cd01554">
    <property type="entry name" value="EPT-like"/>
    <property type="match status" value="1"/>
</dbReference>
<dbReference type="FunFam" id="3.65.10.10:FF:000003">
    <property type="entry name" value="3-phosphoshikimate 1-carboxyvinyltransferase"/>
    <property type="match status" value="1"/>
</dbReference>
<dbReference type="FunFam" id="3.65.10.10:FF:000004">
    <property type="entry name" value="3-phosphoshikimate 1-carboxyvinyltransferase"/>
    <property type="match status" value="1"/>
</dbReference>
<dbReference type="Gene3D" id="3.65.10.10">
    <property type="entry name" value="Enolpyruvate transferase domain"/>
    <property type="match status" value="2"/>
</dbReference>
<dbReference type="HAMAP" id="MF_00210">
    <property type="entry name" value="EPSP_synth"/>
    <property type="match status" value="1"/>
</dbReference>
<dbReference type="InterPro" id="IPR001986">
    <property type="entry name" value="Enolpyruvate_Tfrase_dom"/>
</dbReference>
<dbReference type="InterPro" id="IPR036968">
    <property type="entry name" value="Enolpyruvate_Tfrase_sf"/>
</dbReference>
<dbReference type="InterPro" id="IPR006264">
    <property type="entry name" value="EPSP_synthase"/>
</dbReference>
<dbReference type="InterPro" id="IPR023193">
    <property type="entry name" value="EPSP_synthase_CS"/>
</dbReference>
<dbReference type="InterPro" id="IPR013792">
    <property type="entry name" value="RNA3'P_cycl/enolpyr_Trfase_a/b"/>
</dbReference>
<dbReference type="NCBIfam" id="TIGR01356">
    <property type="entry name" value="aroA"/>
    <property type="match status" value="1"/>
</dbReference>
<dbReference type="PANTHER" id="PTHR21090">
    <property type="entry name" value="AROM/DEHYDROQUINATE SYNTHASE"/>
    <property type="match status" value="1"/>
</dbReference>
<dbReference type="PANTHER" id="PTHR21090:SF5">
    <property type="entry name" value="PENTAFUNCTIONAL AROM POLYPEPTIDE"/>
    <property type="match status" value="1"/>
</dbReference>
<dbReference type="Pfam" id="PF00275">
    <property type="entry name" value="EPSP_synthase"/>
    <property type="match status" value="1"/>
</dbReference>
<dbReference type="PIRSF" id="PIRSF000505">
    <property type="entry name" value="EPSPS"/>
    <property type="match status" value="1"/>
</dbReference>
<dbReference type="SUPFAM" id="SSF55205">
    <property type="entry name" value="EPT/RTPC-like"/>
    <property type="match status" value="1"/>
</dbReference>
<dbReference type="PROSITE" id="PS00104">
    <property type="entry name" value="EPSP_SYNTHASE_1"/>
    <property type="match status" value="1"/>
</dbReference>
<dbReference type="PROSITE" id="PS00885">
    <property type="entry name" value="EPSP_SYNTHASE_2"/>
    <property type="match status" value="1"/>
</dbReference>
<accession>A7ZYL1</accession>
<name>AROA_ECOHS</name>
<gene>
    <name evidence="1" type="primary">aroA</name>
    <name type="ordered locus">EcHS_A1014</name>
</gene>
<sequence>MESLTLQPIARVDGTINLPGSKSVSNRALLLAALAHGKTVLTNLLDSDDVRHMLNALTGLGVSYTLSADRTRCEIIGNGGPLHAEGALELFLGNAGTAMRPLAAALCLGSNDIVLTGEPRMKERPIGHLVDALRLGGAKITYLEQENYPPLRLQGGFTGGNVDVDGSVSSQFLTALLMTAPLAPEDTVIRIKGDLVSKPYIDITLNLMKTFGVEIENQHYQQFVVKGGQSYQSPGTYLVEGDASSASYFLAAAAIKGGTVKVTGIGRNSMQGDIRFADVLEKMGATICWGDDYISCTRGELNAIDMDMNHIPDAAMTIATAALFAKGTTTLRNIYNWRVKETDRLFAMATELRKVGAEVEEGHDYIRITPPEKLNFAEIATYNDHRMAMCFSLVALSDTPVTILDPKCTAKTFPDYFEQLARISQAA</sequence>
<feature type="chain" id="PRO_1000058598" description="3-phosphoshikimate 1-carboxyvinyltransferase">
    <location>
        <begin position="1"/>
        <end position="427"/>
    </location>
</feature>
<feature type="active site" description="Proton acceptor" evidence="1">
    <location>
        <position position="313"/>
    </location>
</feature>
<feature type="binding site" evidence="1">
    <location>
        <position position="22"/>
    </location>
    <ligand>
        <name>3-phosphoshikimate</name>
        <dbReference type="ChEBI" id="CHEBI:145989"/>
    </ligand>
</feature>
<feature type="binding site" evidence="1">
    <location>
        <position position="22"/>
    </location>
    <ligand>
        <name>phosphoenolpyruvate</name>
        <dbReference type="ChEBI" id="CHEBI:58702"/>
    </ligand>
</feature>
<feature type="binding site" evidence="1">
    <location>
        <position position="23"/>
    </location>
    <ligand>
        <name>3-phosphoshikimate</name>
        <dbReference type="ChEBI" id="CHEBI:145989"/>
    </ligand>
</feature>
<feature type="binding site" evidence="1">
    <location>
        <position position="27"/>
    </location>
    <ligand>
        <name>3-phosphoshikimate</name>
        <dbReference type="ChEBI" id="CHEBI:145989"/>
    </ligand>
</feature>
<feature type="binding site" evidence="1">
    <location>
        <position position="96"/>
    </location>
    <ligand>
        <name>phosphoenolpyruvate</name>
        <dbReference type="ChEBI" id="CHEBI:58702"/>
    </ligand>
</feature>
<feature type="binding site" evidence="1">
    <location>
        <position position="124"/>
    </location>
    <ligand>
        <name>phosphoenolpyruvate</name>
        <dbReference type="ChEBI" id="CHEBI:58702"/>
    </ligand>
</feature>
<feature type="binding site" evidence="1">
    <location>
        <position position="169"/>
    </location>
    <ligand>
        <name>3-phosphoshikimate</name>
        <dbReference type="ChEBI" id="CHEBI:145989"/>
    </ligand>
</feature>
<feature type="binding site" evidence="1">
    <location>
        <position position="170"/>
    </location>
    <ligand>
        <name>3-phosphoshikimate</name>
        <dbReference type="ChEBI" id="CHEBI:145989"/>
    </ligand>
</feature>
<feature type="binding site" evidence="1">
    <location>
        <position position="171"/>
    </location>
    <ligand>
        <name>3-phosphoshikimate</name>
        <dbReference type="ChEBI" id="CHEBI:145989"/>
    </ligand>
</feature>
<feature type="binding site" evidence="1">
    <location>
        <position position="171"/>
    </location>
    <ligand>
        <name>phosphoenolpyruvate</name>
        <dbReference type="ChEBI" id="CHEBI:58702"/>
    </ligand>
</feature>
<feature type="binding site" evidence="1">
    <location>
        <position position="197"/>
    </location>
    <ligand>
        <name>3-phosphoshikimate</name>
        <dbReference type="ChEBI" id="CHEBI:145989"/>
    </ligand>
</feature>
<feature type="binding site" evidence="1">
    <location>
        <position position="313"/>
    </location>
    <ligand>
        <name>3-phosphoshikimate</name>
        <dbReference type="ChEBI" id="CHEBI:145989"/>
    </ligand>
</feature>
<feature type="binding site" evidence="1">
    <location>
        <position position="336"/>
    </location>
    <ligand>
        <name>3-phosphoshikimate</name>
        <dbReference type="ChEBI" id="CHEBI:145989"/>
    </ligand>
</feature>
<feature type="binding site" evidence="1">
    <location>
        <position position="340"/>
    </location>
    <ligand>
        <name>3-phosphoshikimate</name>
        <dbReference type="ChEBI" id="CHEBI:145989"/>
    </ligand>
</feature>
<feature type="binding site" evidence="1">
    <location>
        <position position="344"/>
    </location>
    <ligand>
        <name>phosphoenolpyruvate</name>
        <dbReference type="ChEBI" id="CHEBI:58702"/>
    </ligand>
</feature>
<feature type="binding site" evidence="1">
    <location>
        <position position="386"/>
    </location>
    <ligand>
        <name>phosphoenolpyruvate</name>
        <dbReference type="ChEBI" id="CHEBI:58702"/>
    </ligand>
</feature>
<feature type="binding site" evidence="1">
    <location>
        <position position="411"/>
    </location>
    <ligand>
        <name>phosphoenolpyruvate</name>
        <dbReference type="ChEBI" id="CHEBI:58702"/>
    </ligand>
</feature>
<proteinExistence type="inferred from homology"/>